<feature type="chain" id="PRO_0000188181" description="ATP synthase epsilon chain">
    <location>
        <begin position="1"/>
        <end position="139"/>
    </location>
</feature>
<protein>
    <recommendedName>
        <fullName evidence="1">ATP synthase epsilon chain</fullName>
    </recommendedName>
    <alternativeName>
        <fullName evidence="1">ATP synthase F1 sector epsilon subunit</fullName>
    </alternativeName>
    <alternativeName>
        <fullName evidence="1">F-ATPase epsilon subunit</fullName>
    </alternativeName>
</protein>
<reference key="1">
    <citation type="journal article" date="2002" name="Environ. Microbiol.">
        <title>Complete genome sequence and comparative analysis of the metabolically versatile Pseudomonas putida KT2440.</title>
        <authorList>
            <person name="Nelson K.E."/>
            <person name="Weinel C."/>
            <person name="Paulsen I.T."/>
            <person name="Dodson R.J."/>
            <person name="Hilbert H."/>
            <person name="Martins dos Santos V.A.P."/>
            <person name="Fouts D.E."/>
            <person name="Gill S.R."/>
            <person name="Pop M."/>
            <person name="Holmes M."/>
            <person name="Brinkac L.M."/>
            <person name="Beanan M.J."/>
            <person name="DeBoy R.T."/>
            <person name="Daugherty S.C."/>
            <person name="Kolonay J.F."/>
            <person name="Madupu R."/>
            <person name="Nelson W.C."/>
            <person name="White O."/>
            <person name="Peterson J.D."/>
            <person name="Khouri H.M."/>
            <person name="Hance I."/>
            <person name="Chris Lee P."/>
            <person name="Holtzapple E.K."/>
            <person name="Scanlan D."/>
            <person name="Tran K."/>
            <person name="Moazzez A."/>
            <person name="Utterback T.R."/>
            <person name="Rizzo M."/>
            <person name="Lee K."/>
            <person name="Kosack D."/>
            <person name="Moestl D."/>
            <person name="Wedler H."/>
            <person name="Lauber J."/>
            <person name="Stjepandic D."/>
            <person name="Hoheisel J."/>
            <person name="Straetz M."/>
            <person name="Heim S."/>
            <person name="Kiewitz C."/>
            <person name="Eisen J.A."/>
            <person name="Timmis K.N."/>
            <person name="Duesterhoeft A."/>
            <person name="Tuemmler B."/>
            <person name="Fraser C.M."/>
        </authorList>
    </citation>
    <scope>NUCLEOTIDE SEQUENCE [LARGE SCALE GENOMIC DNA]</scope>
    <source>
        <strain>ATCC 47054 / DSM 6125 / CFBP 8728 / NCIMB 11950 / KT2440</strain>
    </source>
</reference>
<gene>
    <name evidence="1" type="primary">atpC</name>
    <name type="ordered locus">PP_5412</name>
</gene>
<organism>
    <name type="scientific">Pseudomonas putida (strain ATCC 47054 / DSM 6125 / CFBP 8728 / NCIMB 11950 / KT2440)</name>
    <dbReference type="NCBI Taxonomy" id="160488"/>
    <lineage>
        <taxon>Bacteria</taxon>
        <taxon>Pseudomonadati</taxon>
        <taxon>Pseudomonadota</taxon>
        <taxon>Gammaproteobacteria</taxon>
        <taxon>Pseudomonadales</taxon>
        <taxon>Pseudomonadaceae</taxon>
        <taxon>Pseudomonas</taxon>
    </lineage>
</organism>
<comment type="function">
    <text evidence="1">Produces ATP from ADP in the presence of a proton gradient across the membrane.</text>
</comment>
<comment type="subunit">
    <text>F-type ATPases have 2 components, CF(1) - the catalytic core - and CF(0) - the membrane proton channel. CF(1) has five subunits: alpha(3), beta(3), gamma(1), delta(1), epsilon(1). CF(0) has three main subunits: a, b and c.</text>
</comment>
<comment type="subcellular location">
    <subcellularLocation>
        <location evidence="1">Cell inner membrane</location>
        <topology evidence="1">Peripheral membrane protein</topology>
    </subcellularLocation>
</comment>
<comment type="similarity">
    <text evidence="1">Belongs to the ATPase epsilon chain family.</text>
</comment>
<evidence type="ECO:0000255" key="1">
    <source>
        <dbReference type="HAMAP-Rule" id="MF_00530"/>
    </source>
</evidence>
<dbReference type="EMBL" id="AE015451">
    <property type="protein sequence ID" value="AAN70976.1"/>
    <property type="molecule type" value="Genomic_DNA"/>
</dbReference>
<dbReference type="RefSeq" id="NP_747512.1">
    <property type="nucleotide sequence ID" value="NC_002947.4"/>
</dbReference>
<dbReference type="RefSeq" id="WP_010955886.1">
    <property type="nucleotide sequence ID" value="NZ_CP169744.1"/>
</dbReference>
<dbReference type="SMR" id="Q88BX5"/>
<dbReference type="STRING" id="160488.PP_5412"/>
<dbReference type="PaxDb" id="160488-PP_5412"/>
<dbReference type="KEGG" id="ppu:PP_5412"/>
<dbReference type="PATRIC" id="fig|160488.4.peg.5780"/>
<dbReference type="eggNOG" id="COG0355">
    <property type="taxonomic scope" value="Bacteria"/>
</dbReference>
<dbReference type="HOGENOM" id="CLU_084338_2_0_6"/>
<dbReference type="OrthoDB" id="9791445at2"/>
<dbReference type="PhylomeDB" id="Q88BX5"/>
<dbReference type="BioCyc" id="PPUT160488:G1G01-5778-MONOMER"/>
<dbReference type="Proteomes" id="UP000000556">
    <property type="component" value="Chromosome"/>
</dbReference>
<dbReference type="GO" id="GO:0005886">
    <property type="term" value="C:plasma membrane"/>
    <property type="evidence" value="ECO:0007669"/>
    <property type="project" value="UniProtKB-SubCell"/>
</dbReference>
<dbReference type="GO" id="GO:0045259">
    <property type="term" value="C:proton-transporting ATP synthase complex"/>
    <property type="evidence" value="ECO:0007669"/>
    <property type="project" value="UniProtKB-KW"/>
</dbReference>
<dbReference type="GO" id="GO:0005524">
    <property type="term" value="F:ATP binding"/>
    <property type="evidence" value="ECO:0007669"/>
    <property type="project" value="UniProtKB-UniRule"/>
</dbReference>
<dbReference type="GO" id="GO:0046933">
    <property type="term" value="F:proton-transporting ATP synthase activity, rotational mechanism"/>
    <property type="evidence" value="ECO:0007669"/>
    <property type="project" value="UniProtKB-UniRule"/>
</dbReference>
<dbReference type="CDD" id="cd12152">
    <property type="entry name" value="F1-ATPase_delta"/>
    <property type="match status" value="1"/>
</dbReference>
<dbReference type="FunFam" id="2.60.15.10:FF:000001">
    <property type="entry name" value="ATP synthase epsilon chain"/>
    <property type="match status" value="1"/>
</dbReference>
<dbReference type="Gene3D" id="1.20.5.440">
    <property type="entry name" value="ATP synthase delta/epsilon subunit, C-terminal domain"/>
    <property type="match status" value="1"/>
</dbReference>
<dbReference type="Gene3D" id="2.60.15.10">
    <property type="entry name" value="F0F1 ATP synthase delta/epsilon subunit, N-terminal"/>
    <property type="match status" value="1"/>
</dbReference>
<dbReference type="HAMAP" id="MF_00530">
    <property type="entry name" value="ATP_synth_epsil_bac"/>
    <property type="match status" value="1"/>
</dbReference>
<dbReference type="InterPro" id="IPR036794">
    <property type="entry name" value="ATP_F1_dsu/esu_C_sf"/>
</dbReference>
<dbReference type="InterPro" id="IPR001469">
    <property type="entry name" value="ATP_synth_F1_dsu/esu"/>
</dbReference>
<dbReference type="InterPro" id="IPR020546">
    <property type="entry name" value="ATP_synth_F1_dsu/esu_N"/>
</dbReference>
<dbReference type="InterPro" id="IPR020547">
    <property type="entry name" value="ATP_synth_F1_esu_C"/>
</dbReference>
<dbReference type="InterPro" id="IPR036771">
    <property type="entry name" value="ATPsynth_dsu/esu_N"/>
</dbReference>
<dbReference type="NCBIfam" id="TIGR01216">
    <property type="entry name" value="ATP_synt_epsi"/>
    <property type="match status" value="1"/>
</dbReference>
<dbReference type="NCBIfam" id="NF001847">
    <property type="entry name" value="PRK00571.1-4"/>
    <property type="match status" value="1"/>
</dbReference>
<dbReference type="PANTHER" id="PTHR13822">
    <property type="entry name" value="ATP SYNTHASE DELTA/EPSILON CHAIN"/>
    <property type="match status" value="1"/>
</dbReference>
<dbReference type="PANTHER" id="PTHR13822:SF10">
    <property type="entry name" value="ATP SYNTHASE EPSILON CHAIN, CHLOROPLASTIC"/>
    <property type="match status" value="1"/>
</dbReference>
<dbReference type="Pfam" id="PF00401">
    <property type="entry name" value="ATP-synt_DE"/>
    <property type="match status" value="1"/>
</dbReference>
<dbReference type="Pfam" id="PF02823">
    <property type="entry name" value="ATP-synt_DE_N"/>
    <property type="match status" value="1"/>
</dbReference>
<dbReference type="SUPFAM" id="SSF46604">
    <property type="entry name" value="Epsilon subunit of F1F0-ATP synthase C-terminal domain"/>
    <property type="match status" value="1"/>
</dbReference>
<dbReference type="SUPFAM" id="SSF51344">
    <property type="entry name" value="Epsilon subunit of F1F0-ATP synthase N-terminal domain"/>
    <property type="match status" value="1"/>
</dbReference>
<sequence>MAMTVHCDIVSAEGEIFSGLVEMVVAHGNLGDLGIAPGHAPLITNLKPGPITLTKQGGAHEVFYISGGFLEVQPNMVKVLADTVQRAADLDEAQAQEALKAAENALNLKGADFDYGAAAARLAEAAAQLRTVQQMRKGK</sequence>
<accession>Q88BX5</accession>
<keyword id="KW-0066">ATP synthesis</keyword>
<keyword id="KW-0997">Cell inner membrane</keyword>
<keyword id="KW-1003">Cell membrane</keyword>
<keyword id="KW-0139">CF(1)</keyword>
<keyword id="KW-0375">Hydrogen ion transport</keyword>
<keyword id="KW-0406">Ion transport</keyword>
<keyword id="KW-0472">Membrane</keyword>
<keyword id="KW-1185">Reference proteome</keyword>
<keyword id="KW-0813">Transport</keyword>
<proteinExistence type="inferred from homology"/>
<name>ATPE_PSEPK</name>